<organism>
    <name type="scientific">Rattus norvegicus</name>
    <name type="common">Rat</name>
    <dbReference type="NCBI Taxonomy" id="10116"/>
    <lineage>
        <taxon>Eukaryota</taxon>
        <taxon>Metazoa</taxon>
        <taxon>Chordata</taxon>
        <taxon>Craniata</taxon>
        <taxon>Vertebrata</taxon>
        <taxon>Euteleostomi</taxon>
        <taxon>Mammalia</taxon>
        <taxon>Eutheria</taxon>
        <taxon>Euarchontoglires</taxon>
        <taxon>Glires</taxon>
        <taxon>Rodentia</taxon>
        <taxon>Myomorpha</taxon>
        <taxon>Muroidea</taxon>
        <taxon>Muridae</taxon>
        <taxon>Murinae</taxon>
        <taxon>Rattus</taxon>
    </lineage>
</organism>
<evidence type="ECO:0000250" key="1">
    <source>
        <dbReference type="UniProtKB" id="P04187"/>
    </source>
</evidence>
<evidence type="ECO:0000250" key="2">
    <source>
        <dbReference type="UniProtKB" id="P10144"/>
    </source>
</evidence>
<evidence type="ECO:0000255" key="3"/>
<evidence type="ECO:0000255" key="4">
    <source>
        <dbReference type="PROSITE-ProRule" id="PRU00274"/>
    </source>
</evidence>
<evidence type="ECO:0000269" key="5">
    <source>
    </source>
</evidence>
<evidence type="ECO:0000269" key="6">
    <source>
    </source>
</evidence>
<evidence type="ECO:0000269" key="7">
    <source>
    </source>
</evidence>
<evidence type="ECO:0000305" key="8"/>
<evidence type="ECO:0007829" key="9">
    <source>
        <dbReference type="PDB" id="1FI8"/>
    </source>
</evidence>
<protein>
    <recommendedName>
        <fullName>Granzyme B</fullName>
        <ecNumber evidence="7">3.4.21.79</ecNumber>
    </recommendedName>
    <alternativeName>
        <fullName>Fragmentin</fullName>
    </alternativeName>
    <alternativeName>
        <fullName>Natural killer cell protease 1</fullName>
    </alternativeName>
    <alternativeName>
        <fullName>RNKP-1</fullName>
    </alternativeName>
</protein>
<accession>P18291</accession>
<feature type="signal peptide" evidence="3">
    <location>
        <begin position="1"/>
        <end position="18"/>
    </location>
</feature>
<feature type="propeptide" id="PRO_0000027425" description="Activation peptide" evidence="6">
    <location>
        <begin position="19"/>
        <end position="20"/>
    </location>
</feature>
<feature type="chain" id="PRO_0000027426" description="Granzyme B">
    <location>
        <begin position="21"/>
        <end position="248"/>
    </location>
</feature>
<feature type="domain" description="Peptidase S1" evidence="4">
    <location>
        <begin position="21"/>
        <end position="246"/>
    </location>
</feature>
<feature type="active site" description="Charge relay system" evidence="5">
    <location>
        <position position="65"/>
    </location>
</feature>
<feature type="active site" description="Charge relay system" evidence="5">
    <location>
        <position position="109"/>
    </location>
</feature>
<feature type="active site" description="Charge relay system" evidence="5">
    <location>
        <position position="204"/>
    </location>
</feature>
<feature type="site" description="Mediates preference for Asp-containing substrates" evidence="5">
    <location>
        <position position="229"/>
    </location>
</feature>
<feature type="disulfide bond" evidence="4 5">
    <location>
        <begin position="50"/>
        <end position="66"/>
    </location>
</feature>
<feature type="disulfide bond" evidence="4 5">
    <location>
        <begin position="143"/>
        <end position="210"/>
    </location>
</feature>
<feature type="disulfide bond" evidence="4 5">
    <location>
        <begin position="174"/>
        <end position="189"/>
    </location>
</feature>
<feature type="mutagenesis site" description="Decreased secretion without affecting the protease activity." evidence="7">
    <original>N</original>
    <variation>Q</variation>
    <location>
        <position position="102"/>
    </location>
</feature>
<feature type="mutagenesis site" description="Does not affect the protease activity." evidence="7">
    <original>R</original>
    <variation>A</variation>
    <location>
        <position position="229"/>
    </location>
</feature>
<feature type="mutagenesis site" description="Decreased activity for acidic amino acids at position P3, whereas the activity against basic amino is increased." evidence="7">
    <original>R</original>
    <variation>E</variation>
    <location>
        <position position="229"/>
    </location>
</feature>
<feature type="sequence conflict" description="In Ref. 3; AA sequence." evidence="8" ref="3">
    <original>H</original>
    <variation>F</variation>
    <location>
        <position position="98"/>
    </location>
</feature>
<feature type="sequence conflict" description="In Ref. 3; AA sequence." evidence="8" ref="3">
    <original>K</original>
    <variation>D</variation>
    <location>
        <position position="138"/>
    </location>
</feature>
<feature type="strand" evidence="9">
    <location>
        <begin position="35"/>
        <end position="41"/>
    </location>
</feature>
<feature type="strand" evidence="9">
    <location>
        <begin position="49"/>
        <end position="56"/>
    </location>
</feature>
<feature type="strand" evidence="9">
    <location>
        <begin position="59"/>
        <end position="62"/>
    </location>
</feature>
<feature type="helix" evidence="9">
    <location>
        <begin position="64"/>
        <end position="66"/>
    </location>
</feature>
<feature type="strand" evidence="9">
    <location>
        <begin position="69"/>
        <end position="76"/>
    </location>
</feature>
<feature type="strand" evidence="9">
    <location>
        <begin position="88"/>
        <end position="97"/>
    </location>
</feature>
<feature type="turn" evidence="9">
    <location>
        <begin position="103"/>
        <end position="106"/>
    </location>
</feature>
<feature type="strand" evidence="9">
    <location>
        <begin position="111"/>
        <end position="117"/>
    </location>
</feature>
<feature type="strand" evidence="9">
    <location>
        <begin position="142"/>
        <end position="148"/>
    </location>
</feature>
<feature type="strand" evidence="9">
    <location>
        <begin position="150"/>
        <end position="152"/>
    </location>
</feature>
<feature type="strand" evidence="9">
    <location>
        <begin position="162"/>
        <end position="168"/>
    </location>
</feature>
<feature type="helix" evidence="9">
    <location>
        <begin position="171"/>
        <end position="177"/>
    </location>
</feature>
<feature type="turn" evidence="9">
    <location>
        <begin position="178"/>
        <end position="181"/>
    </location>
</feature>
<feature type="turn" evidence="9">
    <location>
        <begin position="184"/>
        <end position="186"/>
    </location>
</feature>
<feature type="strand" evidence="9">
    <location>
        <begin position="187"/>
        <end position="191"/>
    </location>
</feature>
<feature type="strand" evidence="9">
    <location>
        <begin position="206"/>
        <end position="210"/>
    </location>
</feature>
<feature type="strand" evidence="9">
    <location>
        <begin position="213"/>
        <end position="222"/>
    </location>
</feature>
<feature type="strand" evidence="9">
    <location>
        <begin position="229"/>
        <end position="233"/>
    </location>
</feature>
<feature type="helix" evidence="9">
    <location>
        <begin position="234"/>
        <end position="237"/>
    </location>
</feature>
<feature type="helix" evidence="9">
    <location>
        <begin position="238"/>
        <end position="245"/>
    </location>
</feature>
<reference key="1">
    <citation type="journal article" date="1990" name="J. Immunol.">
        <title>RNKP-1, a novel natural killer-associated serine protease gene cloned from RNK-16 cytotoxic lymphocytes.</title>
        <authorList>
            <person name="Zunino S.J."/>
            <person name="Bleackley R.C."/>
            <person name="Martinez J."/>
            <person name="Hudig D."/>
        </authorList>
    </citation>
    <scope>NUCLEOTIDE SEQUENCE [MRNA]</scope>
    <source>
        <tissue>T-cell</tissue>
    </source>
</reference>
<reference key="2">
    <citation type="journal article" date="1992" name="J. Immunol.">
        <title>Purification of a factor from the granules of a rat natural killer cell line (RNK) that reduces tumor cell growth and changes tumor morphology. Molecular identity with a granule serine protease (RNKP-1).</title>
        <authorList>
            <person name="Sayers T.J."/>
            <person name="Wiltrout T.A."/>
            <person name="Sowder R."/>
            <person name="Munger W.L."/>
            <person name="Smyth M.J."/>
            <person name="Henderson L.E."/>
        </authorList>
    </citation>
    <scope>PROTEIN SEQUENCE OF 21-53</scope>
</reference>
<reference key="3">
    <citation type="journal article" date="1992" name="J. Exp. Med.">
        <title>A natural killer cell granule protein that induces DNA fragmentation and apoptosis.</title>
        <authorList>
            <person name="Shi L."/>
            <person name="Kraut R.P."/>
            <person name="Aebersold R."/>
            <person name="Greenberg A.H."/>
        </authorList>
    </citation>
    <scope>PARTIAL PROTEIN SEQUENCE</scope>
</reference>
<reference key="4">
    <citation type="journal article" date="1998" name="J. Biol. Chem.">
        <title>Definition and redesign of the extended substrate specificity of granzyme B.</title>
        <authorList>
            <person name="Harris J.L."/>
            <person name="Peterson E.P."/>
            <person name="Hudig D."/>
            <person name="Thornberry N.A."/>
            <person name="Craik C.S."/>
        </authorList>
    </citation>
    <scope>FUNCTION</scope>
    <scope>CATALYTIC ACTIVITY</scope>
    <scope>SUBCELLULAR LOCATION</scope>
    <scope>MUTAGENESIS OF ASN-102 AND ARG-229</scope>
</reference>
<reference key="5">
    <citation type="journal article" date="2000" name="Nat. Struct. Biol.">
        <title>The structure of the pro-apoptotic protease granzyme B reveals the molecular determinants of its specificity.</title>
        <authorList>
            <person name="Waugh S.M."/>
            <person name="Harris J.L."/>
            <person name="Fletterick R."/>
            <person name="Craik C.S."/>
        </authorList>
    </citation>
    <scope>X-RAY CRYSTALLOGRAPHY (2.2 ANGSTROMS) OF 21-248 IN COMPLEX WITH E.COLI ECOTIN</scope>
    <scope>ACTIVE SITE</scope>
    <scope>DISULFIDE BONDS</scope>
</reference>
<gene>
    <name type="primary">Gzmb</name>
</gene>
<name>GRAB_RAT</name>
<sequence>MKLLLLLLSFSLAPKTEAGEIIGGHEAKPHSRPYMAYLQIMDEYSGSKKCGGFLIREDFVLTAAHCSGSKINVTLGAHNIKEQEKMQQIIPVVKIIPHPAYNSKTISNDIMLLKLKSKAKRSSAVKPLNLPRRNVKVKPGDVCYVAGWGKLGPMGKYSDTLQEVELTVQEDQKCESYLKNYFDKANEICAGDPKIKRASFRGDSGGPLVCKKVAAGIVSYGQNDGSTPRAFTKVSTFLSWIKKTMKKS</sequence>
<proteinExistence type="evidence at protein level"/>
<dbReference type="EC" id="3.4.21.79" evidence="7"/>
<dbReference type="EMBL" id="M34097">
    <property type="protein sequence ID" value="AAA42055.1"/>
    <property type="molecule type" value="mRNA"/>
</dbReference>
<dbReference type="PIR" id="A43520">
    <property type="entry name" value="A43520"/>
</dbReference>
<dbReference type="RefSeq" id="NP_612526.2">
    <property type="nucleotide sequence ID" value="NM_138517.3"/>
</dbReference>
<dbReference type="RefSeq" id="XP_002728303.2">
    <property type="nucleotide sequence ID" value="XM_002728257.5"/>
</dbReference>
<dbReference type="RefSeq" id="XP_017460403.1">
    <property type="nucleotide sequence ID" value="XM_017604914.1"/>
</dbReference>
<dbReference type="PDB" id="1FI8">
    <property type="method" value="X-ray"/>
    <property type="resolution" value="2.20 A"/>
    <property type="chains" value="A/B=21-248"/>
</dbReference>
<dbReference type="PDBsum" id="1FI8"/>
<dbReference type="SMR" id="P18291"/>
<dbReference type="FunCoup" id="P18291">
    <property type="interactions" value="117"/>
</dbReference>
<dbReference type="IntAct" id="P18291">
    <property type="interactions" value="1"/>
</dbReference>
<dbReference type="STRING" id="10116.ENSRNOP00000040429"/>
<dbReference type="MEROPS" id="S01.091"/>
<dbReference type="PhosphoSitePlus" id="P18291"/>
<dbReference type="PaxDb" id="10116-ENSRNOP00000040429"/>
<dbReference type="Ensembl" id="ENSRNOT00000041430.6">
    <property type="protein sequence ID" value="ENSRNOP00000040429.3"/>
    <property type="gene ID" value="ENSRNOG00000049976.3"/>
</dbReference>
<dbReference type="GeneID" id="171528"/>
<dbReference type="KEGG" id="rno:171528"/>
<dbReference type="UCSC" id="RGD:620018">
    <property type="organism name" value="rat"/>
</dbReference>
<dbReference type="AGR" id="RGD:620018"/>
<dbReference type="CTD" id="3002"/>
<dbReference type="RGD" id="620018">
    <property type="gene designation" value="Gzmb"/>
</dbReference>
<dbReference type="eggNOG" id="KOG3627">
    <property type="taxonomic scope" value="Eukaryota"/>
</dbReference>
<dbReference type="GeneTree" id="ENSGT01030000234551"/>
<dbReference type="HOGENOM" id="CLU_006842_1_0_1"/>
<dbReference type="InParanoid" id="P18291"/>
<dbReference type="OMA" id="PAYNPEK"/>
<dbReference type="OrthoDB" id="5565075at2759"/>
<dbReference type="PhylomeDB" id="P18291"/>
<dbReference type="TreeFam" id="TF333630"/>
<dbReference type="BRENDA" id="3.4.21.79">
    <property type="organism ID" value="5301"/>
</dbReference>
<dbReference type="Reactome" id="R-RNO-5620971">
    <property type="pathway name" value="Pyroptosis"/>
</dbReference>
<dbReference type="Reactome" id="R-RNO-75108">
    <property type="pathway name" value="Activation, myristolyation of BID and translocation to mitochondria"/>
</dbReference>
<dbReference type="EvolutionaryTrace" id="P18291"/>
<dbReference type="Proteomes" id="UP000002494">
    <property type="component" value="Chromosome 15"/>
</dbReference>
<dbReference type="Bgee" id="ENSRNOG00000045973">
    <property type="expression patterns" value="Expressed in jejunum and 11 other cell types or tissues"/>
</dbReference>
<dbReference type="ExpressionAtlas" id="P18291">
    <property type="expression patterns" value="baseline and differential"/>
</dbReference>
<dbReference type="GO" id="GO:0044194">
    <property type="term" value="C:cytolytic granule"/>
    <property type="evidence" value="ECO:0000250"/>
    <property type="project" value="UniProtKB"/>
</dbReference>
<dbReference type="GO" id="GO:0005737">
    <property type="term" value="C:cytoplasm"/>
    <property type="evidence" value="ECO:0000266"/>
    <property type="project" value="RGD"/>
</dbReference>
<dbReference type="GO" id="GO:0005769">
    <property type="term" value="C:early endosome"/>
    <property type="evidence" value="ECO:0000314"/>
    <property type="project" value="RGD"/>
</dbReference>
<dbReference type="GO" id="GO:0005615">
    <property type="term" value="C:extracellular space"/>
    <property type="evidence" value="ECO:0000266"/>
    <property type="project" value="RGD"/>
</dbReference>
<dbReference type="GO" id="GO:0004252">
    <property type="term" value="F:serine-type endopeptidase activity"/>
    <property type="evidence" value="ECO:0000314"/>
    <property type="project" value="RGD"/>
</dbReference>
<dbReference type="GO" id="GO:0008236">
    <property type="term" value="F:serine-type peptidase activity"/>
    <property type="evidence" value="ECO:0000314"/>
    <property type="project" value="UniProtKB"/>
</dbReference>
<dbReference type="GO" id="GO:0042742">
    <property type="term" value="P:defense response to bacterium"/>
    <property type="evidence" value="ECO:0000266"/>
    <property type="project" value="RGD"/>
</dbReference>
<dbReference type="GO" id="GO:0140507">
    <property type="term" value="P:granzyme-mediated programmed cell death signaling pathway"/>
    <property type="evidence" value="ECO:0000250"/>
    <property type="project" value="UniProtKB"/>
</dbReference>
<dbReference type="GO" id="GO:0031640">
    <property type="term" value="P:killing of cells of another organism"/>
    <property type="evidence" value="ECO:0007669"/>
    <property type="project" value="UniProtKB-KW"/>
</dbReference>
<dbReference type="GO" id="GO:0042267">
    <property type="term" value="P:natural killer cell mediated cytotoxicity"/>
    <property type="evidence" value="ECO:0000250"/>
    <property type="project" value="UniProtKB"/>
</dbReference>
<dbReference type="GO" id="GO:0017148">
    <property type="term" value="P:negative regulation of translation"/>
    <property type="evidence" value="ECO:0000266"/>
    <property type="project" value="RGD"/>
</dbReference>
<dbReference type="GO" id="GO:0051402">
    <property type="term" value="P:neuron apoptotic process"/>
    <property type="evidence" value="ECO:0000314"/>
    <property type="project" value="RGD"/>
</dbReference>
<dbReference type="GO" id="GO:0060545">
    <property type="term" value="P:positive regulation of necroptotic process"/>
    <property type="evidence" value="ECO:0000315"/>
    <property type="project" value="RGD"/>
</dbReference>
<dbReference type="GO" id="GO:0051604">
    <property type="term" value="P:protein maturation"/>
    <property type="evidence" value="ECO:0000266"/>
    <property type="project" value="RGD"/>
</dbReference>
<dbReference type="GO" id="GO:0051603">
    <property type="term" value="P:proteolysis involved in protein catabolic process"/>
    <property type="evidence" value="ECO:0000250"/>
    <property type="project" value="UniProtKB"/>
</dbReference>
<dbReference type="GO" id="GO:0070269">
    <property type="term" value="P:pyroptotic inflammatory response"/>
    <property type="evidence" value="ECO:0000250"/>
    <property type="project" value="UniProtKB"/>
</dbReference>
<dbReference type="GO" id="GO:0001913">
    <property type="term" value="P:T cell mediated cytotoxicity"/>
    <property type="evidence" value="ECO:0000266"/>
    <property type="project" value="RGD"/>
</dbReference>
<dbReference type="CDD" id="cd00190">
    <property type="entry name" value="Tryp_SPc"/>
    <property type="match status" value="1"/>
</dbReference>
<dbReference type="FunFam" id="2.40.10.10:FF:000120">
    <property type="entry name" value="Putative serine protease"/>
    <property type="match status" value="1"/>
</dbReference>
<dbReference type="Gene3D" id="2.40.10.10">
    <property type="entry name" value="Trypsin-like serine proteases"/>
    <property type="match status" value="2"/>
</dbReference>
<dbReference type="InterPro" id="IPR009003">
    <property type="entry name" value="Peptidase_S1_PA"/>
</dbReference>
<dbReference type="InterPro" id="IPR043504">
    <property type="entry name" value="Peptidase_S1_PA_chymotrypsin"/>
</dbReference>
<dbReference type="InterPro" id="IPR001314">
    <property type="entry name" value="Peptidase_S1A"/>
</dbReference>
<dbReference type="InterPro" id="IPR001254">
    <property type="entry name" value="Trypsin_dom"/>
</dbReference>
<dbReference type="InterPro" id="IPR018114">
    <property type="entry name" value="TRYPSIN_HIS"/>
</dbReference>
<dbReference type="InterPro" id="IPR033116">
    <property type="entry name" value="TRYPSIN_SER"/>
</dbReference>
<dbReference type="PANTHER" id="PTHR24271:SF81">
    <property type="entry name" value="GRANZYME B"/>
    <property type="match status" value="1"/>
</dbReference>
<dbReference type="PANTHER" id="PTHR24271">
    <property type="entry name" value="KALLIKREIN-RELATED"/>
    <property type="match status" value="1"/>
</dbReference>
<dbReference type="Pfam" id="PF00089">
    <property type="entry name" value="Trypsin"/>
    <property type="match status" value="1"/>
</dbReference>
<dbReference type="PRINTS" id="PR00722">
    <property type="entry name" value="CHYMOTRYPSIN"/>
</dbReference>
<dbReference type="SMART" id="SM00020">
    <property type="entry name" value="Tryp_SPc"/>
    <property type="match status" value="1"/>
</dbReference>
<dbReference type="SUPFAM" id="SSF50494">
    <property type="entry name" value="Trypsin-like serine proteases"/>
    <property type="match status" value="1"/>
</dbReference>
<dbReference type="PROSITE" id="PS50240">
    <property type="entry name" value="TRYPSIN_DOM"/>
    <property type="match status" value="1"/>
</dbReference>
<dbReference type="PROSITE" id="PS00134">
    <property type="entry name" value="TRYPSIN_HIS"/>
    <property type="match status" value="1"/>
</dbReference>
<dbReference type="PROSITE" id="PS00135">
    <property type="entry name" value="TRYPSIN_SER"/>
    <property type="match status" value="1"/>
</dbReference>
<keyword id="KW-0002">3D-structure</keyword>
<keyword id="KW-0053">Apoptosis</keyword>
<keyword id="KW-0204">Cytolysis</keyword>
<keyword id="KW-0903">Direct protein sequencing</keyword>
<keyword id="KW-1015">Disulfide bond</keyword>
<keyword id="KW-0378">Hydrolase</keyword>
<keyword id="KW-0458">Lysosome</keyword>
<keyword id="KW-0645">Protease</keyword>
<keyword id="KW-1185">Reference proteome</keyword>
<keyword id="KW-0964">Secreted</keyword>
<keyword id="KW-0720">Serine protease</keyword>
<keyword id="KW-0732">Signal</keyword>
<keyword id="KW-0865">Zymogen</keyword>
<comment type="function">
    <text evidence="1 2 7">Abundant protease in the cytosolic granules of cytotoxic T-cells and NK-cells which activates caspase-independent pyroptosis when delivered into the target cell through the immunological synapse (By similarity). It cleaves after Asp (PubMed:9765264). Once delivered into the target cell, acts by catalyzing cleavage of gasdermin-E (GSDME), releasing the pore-forming moiety of GSDME, thereby triggering pyroptosis and target cell death (By similarity). Seems to be linked to an activation cascade of caspases (aspartate-specific cysteine proteases) responsible for apoptosis execution (By similarity). Cleaves caspase-3 and -9 (CASP3 and CASP9, respectively) to give rise to active enzymes mediating apoptosis (PubMed:9765264). Cleaves and activates CASP7 in response to bacterial infection, promoting plasma membrane repair (By similarity).</text>
</comment>
<comment type="catalytic activity">
    <reaction evidence="7">
        <text>Preferential cleavage: -Asp-|-Xaa- &gt;&gt; -Asn-|-Xaa- &gt; -Met-|-Xaa-, -Ser-|-Xaa-.</text>
        <dbReference type="EC" id="3.4.21.79"/>
    </reaction>
</comment>
<comment type="activity regulation">
    <text evidence="2">Inactivated by the serine protease inhibitor diisopropylfluorophosphate.</text>
</comment>
<comment type="subcellular location">
    <subcellularLocation>
        <location evidence="7">Secreted</location>
    </subcellularLocation>
    <subcellularLocation>
        <location evidence="2">Cytolytic granule</location>
    </subcellularLocation>
    <text evidence="2">Delivered into the target cell by perforin.</text>
</comment>
<comment type="similarity">
    <text evidence="4">Belongs to the peptidase S1 family. Granzyme subfamily.</text>
</comment>